<dbReference type="EMBL" id="L47648">
    <property type="protein sequence ID" value="AAC83949.1"/>
    <property type="molecule type" value="Genomic_DNA"/>
</dbReference>
<dbReference type="EMBL" id="AL009126">
    <property type="protein sequence ID" value="CAB14216.1"/>
    <property type="molecule type" value="Genomic_DNA"/>
</dbReference>
<dbReference type="PIR" id="H69932">
    <property type="entry name" value="H69932"/>
</dbReference>
<dbReference type="RefSeq" id="NP_390181.1">
    <property type="nucleotide sequence ID" value="NC_000964.3"/>
</dbReference>
<dbReference type="RefSeq" id="WP_004398603.1">
    <property type="nucleotide sequence ID" value="NZ_OZ025638.1"/>
</dbReference>
<dbReference type="SMR" id="P50731"/>
<dbReference type="BioGRID" id="856571">
    <property type="interactions" value="4"/>
</dbReference>
<dbReference type="FunCoup" id="P50731">
    <property type="interactions" value="16"/>
</dbReference>
<dbReference type="STRING" id="224308.BSU23000"/>
<dbReference type="PaxDb" id="224308-BSU23000"/>
<dbReference type="EnsemblBacteria" id="CAB14216">
    <property type="protein sequence ID" value="CAB14216"/>
    <property type="gene ID" value="BSU_23000"/>
</dbReference>
<dbReference type="GeneID" id="938971"/>
<dbReference type="KEGG" id="bsu:BSU23000"/>
<dbReference type="PATRIC" id="fig|224308.179.peg.2507"/>
<dbReference type="eggNOG" id="COG1388">
    <property type="taxonomic scope" value="Bacteria"/>
</dbReference>
<dbReference type="InParanoid" id="P50731"/>
<dbReference type="OrthoDB" id="2583609at2"/>
<dbReference type="BioCyc" id="BSUB:BSU23000-MONOMER"/>
<dbReference type="Proteomes" id="UP000001570">
    <property type="component" value="Chromosome"/>
</dbReference>
<dbReference type="GO" id="GO:0016020">
    <property type="term" value="C:membrane"/>
    <property type="evidence" value="ECO:0007669"/>
    <property type="project" value="UniProtKB-SubCell"/>
</dbReference>
<dbReference type="GO" id="GO:0008932">
    <property type="term" value="F:lytic endotransglycosylase activity"/>
    <property type="evidence" value="ECO:0000318"/>
    <property type="project" value="GO_Central"/>
</dbReference>
<dbReference type="CDD" id="cd00118">
    <property type="entry name" value="LysM"/>
    <property type="match status" value="1"/>
</dbReference>
<dbReference type="Gene3D" id="3.10.350.10">
    <property type="entry name" value="LysM domain"/>
    <property type="match status" value="1"/>
</dbReference>
<dbReference type="InterPro" id="IPR018392">
    <property type="entry name" value="LysM_dom"/>
</dbReference>
<dbReference type="InterPro" id="IPR036779">
    <property type="entry name" value="LysM_dom_sf"/>
</dbReference>
<dbReference type="Pfam" id="PF01476">
    <property type="entry name" value="LysM"/>
    <property type="match status" value="1"/>
</dbReference>
<dbReference type="SMART" id="SM00257">
    <property type="entry name" value="LysM"/>
    <property type="match status" value="1"/>
</dbReference>
<dbReference type="SUPFAM" id="SSF54106">
    <property type="entry name" value="LysM domain"/>
    <property type="match status" value="1"/>
</dbReference>
<dbReference type="PROSITE" id="PS51782">
    <property type="entry name" value="LYSM"/>
    <property type="match status" value="1"/>
</dbReference>
<organism>
    <name type="scientific">Bacillus subtilis (strain 168)</name>
    <dbReference type="NCBI Taxonomy" id="224308"/>
    <lineage>
        <taxon>Bacteria</taxon>
        <taxon>Bacillati</taxon>
        <taxon>Bacillota</taxon>
        <taxon>Bacilli</taxon>
        <taxon>Bacillales</taxon>
        <taxon>Bacillaceae</taxon>
        <taxon>Bacillus</taxon>
    </lineage>
</organism>
<protein>
    <recommendedName>
        <fullName>Uncharacterized protein YpbE</fullName>
    </recommendedName>
</protein>
<sequence>MTNMSRVERRKAQNLYEDQNAALADDYVDDGESLPTRQSVKNQREQKKKQGKTKTPLFTVLAVIFVFVPVIVLVTLFYLKSHPDNHDDYEDVFIDSSQSKYEVVPKSEDKNDTADTKETALQKESKKEPEDSKPKEQTAADKKQTAVAEKEDSPNKEEATAAAASSSQSTVQQQEQPAEPVQNVPNRVVKHTVQKKETLYRISMKYYKSRTGEEKIRAYNHLNGNDVYTGQVLDIPLMDE</sequence>
<name>YPBE_BACSU</name>
<proteinExistence type="predicted"/>
<accession>P50731</accession>
<feature type="chain" id="PRO_0000049679" description="Uncharacterized protein YpbE">
    <location>
        <begin position="1"/>
        <end position="240"/>
    </location>
</feature>
<feature type="transmembrane region" description="Helical" evidence="1">
    <location>
        <begin position="57"/>
        <end position="77"/>
    </location>
</feature>
<feature type="domain" description="LysM" evidence="2">
    <location>
        <begin position="189"/>
        <end position="235"/>
    </location>
</feature>
<feature type="region of interest" description="Disordered" evidence="3">
    <location>
        <begin position="26"/>
        <end position="52"/>
    </location>
</feature>
<feature type="region of interest" description="Disordered" evidence="3">
    <location>
        <begin position="100"/>
        <end position="185"/>
    </location>
</feature>
<feature type="compositionally biased region" description="Basic and acidic residues" evidence="3">
    <location>
        <begin position="103"/>
        <end position="159"/>
    </location>
</feature>
<feature type="compositionally biased region" description="Low complexity" evidence="3">
    <location>
        <begin position="160"/>
        <end position="185"/>
    </location>
</feature>
<evidence type="ECO:0000255" key="1"/>
<evidence type="ECO:0000255" key="2">
    <source>
        <dbReference type="PROSITE-ProRule" id="PRU01118"/>
    </source>
</evidence>
<evidence type="ECO:0000256" key="3">
    <source>
        <dbReference type="SAM" id="MobiDB-lite"/>
    </source>
</evidence>
<evidence type="ECO:0000305" key="4"/>
<reference key="1">
    <citation type="journal article" date="1996" name="Microbiology">
        <title>Sequence analysis of the Bacillus subtilis chromosome region between the serA and kdg loci cloned in a yeast artificial chromosome.</title>
        <authorList>
            <person name="Sorokin A.V."/>
            <person name="Azevedo V."/>
            <person name="Zumstein E."/>
            <person name="Galleron N."/>
            <person name="Ehrlich S.D."/>
            <person name="Serror P."/>
        </authorList>
    </citation>
    <scope>NUCLEOTIDE SEQUENCE [GENOMIC DNA]</scope>
    <source>
        <strain>168 / Marburg / ATCC 6051 / DSM 10 / JCM 1465 / NBRC 13719 / NCIMB 3610 / NRRL NRS-744 / VKM B-501</strain>
    </source>
</reference>
<reference key="2">
    <citation type="journal article" date="1997" name="Nature">
        <title>The complete genome sequence of the Gram-positive bacterium Bacillus subtilis.</title>
        <authorList>
            <person name="Kunst F."/>
            <person name="Ogasawara N."/>
            <person name="Moszer I."/>
            <person name="Albertini A.M."/>
            <person name="Alloni G."/>
            <person name="Azevedo V."/>
            <person name="Bertero M.G."/>
            <person name="Bessieres P."/>
            <person name="Bolotin A."/>
            <person name="Borchert S."/>
            <person name="Borriss R."/>
            <person name="Boursier L."/>
            <person name="Brans A."/>
            <person name="Braun M."/>
            <person name="Brignell S.C."/>
            <person name="Bron S."/>
            <person name="Brouillet S."/>
            <person name="Bruschi C.V."/>
            <person name="Caldwell B."/>
            <person name="Capuano V."/>
            <person name="Carter N.M."/>
            <person name="Choi S.-K."/>
            <person name="Codani J.-J."/>
            <person name="Connerton I.F."/>
            <person name="Cummings N.J."/>
            <person name="Daniel R.A."/>
            <person name="Denizot F."/>
            <person name="Devine K.M."/>
            <person name="Duesterhoeft A."/>
            <person name="Ehrlich S.D."/>
            <person name="Emmerson P.T."/>
            <person name="Entian K.-D."/>
            <person name="Errington J."/>
            <person name="Fabret C."/>
            <person name="Ferrari E."/>
            <person name="Foulger D."/>
            <person name="Fritz C."/>
            <person name="Fujita M."/>
            <person name="Fujita Y."/>
            <person name="Fuma S."/>
            <person name="Galizzi A."/>
            <person name="Galleron N."/>
            <person name="Ghim S.-Y."/>
            <person name="Glaser P."/>
            <person name="Goffeau A."/>
            <person name="Golightly E.J."/>
            <person name="Grandi G."/>
            <person name="Guiseppi G."/>
            <person name="Guy B.J."/>
            <person name="Haga K."/>
            <person name="Haiech J."/>
            <person name="Harwood C.R."/>
            <person name="Henaut A."/>
            <person name="Hilbert H."/>
            <person name="Holsappel S."/>
            <person name="Hosono S."/>
            <person name="Hullo M.-F."/>
            <person name="Itaya M."/>
            <person name="Jones L.-M."/>
            <person name="Joris B."/>
            <person name="Karamata D."/>
            <person name="Kasahara Y."/>
            <person name="Klaerr-Blanchard M."/>
            <person name="Klein C."/>
            <person name="Kobayashi Y."/>
            <person name="Koetter P."/>
            <person name="Koningstein G."/>
            <person name="Krogh S."/>
            <person name="Kumano M."/>
            <person name="Kurita K."/>
            <person name="Lapidus A."/>
            <person name="Lardinois S."/>
            <person name="Lauber J."/>
            <person name="Lazarevic V."/>
            <person name="Lee S.-M."/>
            <person name="Levine A."/>
            <person name="Liu H."/>
            <person name="Masuda S."/>
            <person name="Mauel C."/>
            <person name="Medigue C."/>
            <person name="Medina N."/>
            <person name="Mellado R.P."/>
            <person name="Mizuno M."/>
            <person name="Moestl D."/>
            <person name="Nakai S."/>
            <person name="Noback M."/>
            <person name="Noone D."/>
            <person name="O'Reilly M."/>
            <person name="Ogawa K."/>
            <person name="Ogiwara A."/>
            <person name="Oudega B."/>
            <person name="Park S.-H."/>
            <person name="Parro V."/>
            <person name="Pohl T.M."/>
            <person name="Portetelle D."/>
            <person name="Porwollik S."/>
            <person name="Prescott A.M."/>
            <person name="Presecan E."/>
            <person name="Pujic P."/>
            <person name="Purnelle B."/>
            <person name="Rapoport G."/>
            <person name="Rey M."/>
            <person name="Reynolds S."/>
            <person name="Rieger M."/>
            <person name="Rivolta C."/>
            <person name="Rocha E."/>
            <person name="Roche B."/>
            <person name="Rose M."/>
            <person name="Sadaie Y."/>
            <person name="Sato T."/>
            <person name="Scanlan E."/>
            <person name="Schleich S."/>
            <person name="Schroeter R."/>
            <person name="Scoffone F."/>
            <person name="Sekiguchi J."/>
            <person name="Sekowska A."/>
            <person name="Seror S.J."/>
            <person name="Serror P."/>
            <person name="Shin B.-S."/>
            <person name="Soldo B."/>
            <person name="Sorokin A."/>
            <person name="Tacconi E."/>
            <person name="Takagi T."/>
            <person name="Takahashi H."/>
            <person name="Takemaru K."/>
            <person name="Takeuchi M."/>
            <person name="Tamakoshi A."/>
            <person name="Tanaka T."/>
            <person name="Terpstra P."/>
            <person name="Tognoni A."/>
            <person name="Tosato V."/>
            <person name="Uchiyama S."/>
            <person name="Vandenbol M."/>
            <person name="Vannier F."/>
            <person name="Vassarotti A."/>
            <person name="Viari A."/>
            <person name="Wambutt R."/>
            <person name="Wedler E."/>
            <person name="Wedler H."/>
            <person name="Weitzenegger T."/>
            <person name="Winters P."/>
            <person name="Wipat A."/>
            <person name="Yamamoto H."/>
            <person name="Yamane K."/>
            <person name="Yasumoto K."/>
            <person name="Yata K."/>
            <person name="Yoshida K."/>
            <person name="Yoshikawa H.-F."/>
            <person name="Zumstein E."/>
            <person name="Yoshikawa H."/>
            <person name="Danchin A."/>
        </authorList>
    </citation>
    <scope>NUCLEOTIDE SEQUENCE [LARGE SCALE GENOMIC DNA]</scope>
    <source>
        <strain>168</strain>
    </source>
</reference>
<gene>
    <name type="primary">ypbE</name>
    <name type="ordered locus">BSU23000</name>
</gene>
<keyword id="KW-0472">Membrane</keyword>
<keyword id="KW-1185">Reference proteome</keyword>
<keyword id="KW-0812">Transmembrane</keyword>
<keyword id="KW-1133">Transmembrane helix</keyword>
<comment type="subcellular location">
    <subcellularLocation>
        <location evidence="4">Membrane</location>
        <topology evidence="4">Single-pass membrane protein</topology>
    </subcellularLocation>
</comment>